<dbReference type="EC" id="3.1.-.-" evidence="1"/>
<dbReference type="EMBL" id="AP006840">
    <property type="protein sequence ID" value="BAD41159.1"/>
    <property type="molecule type" value="Genomic_DNA"/>
</dbReference>
<dbReference type="SMR" id="Q67MD4"/>
<dbReference type="STRING" id="292459.STH2174"/>
<dbReference type="KEGG" id="sth:STH2174"/>
<dbReference type="eggNOG" id="COG3857">
    <property type="taxonomic scope" value="Bacteria"/>
</dbReference>
<dbReference type="HOGENOM" id="CLU_007838_0_0_9"/>
<dbReference type="Proteomes" id="UP000000417">
    <property type="component" value="Chromosome"/>
</dbReference>
<dbReference type="GO" id="GO:0051539">
    <property type="term" value="F:4 iron, 4 sulfur cluster binding"/>
    <property type="evidence" value="ECO:0007669"/>
    <property type="project" value="UniProtKB-KW"/>
</dbReference>
<dbReference type="GO" id="GO:0008409">
    <property type="term" value="F:5'-3' exonuclease activity"/>
    <property type="evidence" value="ECO:0007669"/>
    <property type="project" value="UniProtKB-UniRule"/>
</dbReference>
<dbReference type="GO" id="GO:0005524">
    <property type="term" value="F:ATP binding"/>
    <property type="evidence" value="ECO:0007669"/>
    <property type="project" value="UniProtKB-UniRule"/>
</dbReference>
<dbReference type="GO" id="GO:0003690">
    <property type="term" value="F:double-stranded DNA binding"/>
    <property type="evidence" value="ECO:0007669"/>
    <property type="project" value="UniProtKB-UniRule"/>
</dbReference>
<dbReference type="GO" id="GO:0004386">
    <property type="term" value="F:helicase activity"/>
    <property type="evidence" value="ECO:0007669"/>
    <property type="project" value="UniProtKB-KW"/>
</dbReference>
<dbReference type="GO" id="GO:0046872">
    <property type="term" value="F:metal ion binding"/>
    <property type="evidence" value="ECO:0007669"/>
    <property type="project" value="UniProtKB-KW"/>
</dbReference>
<dbReference type="GO" id="GO:0000724">
    <property type="term" value="P:double-strand break repair via homologous recombination"/>
    <property type="evidence" value="ECO:0007669"/>
    <property type="project" value="UniProtKB-UniRule"/>
</dbReference>
<dbReference type="Gene3D" id="3.90.320.10">
    <property type="match status" value="1"/>
</dbReference>
<dbReference type="Gene3D" id="3.40.50.300">
    <property type="entry name" value="P-loop containing nucleotide triphosphate hydrolases"/>
    <property type="match status" value="4"/>
</dbReference>
<dbReference type="HAMAP" id="MF_01452">
    <property type="entry name" value="AddB_type1"/>
    <property type="match status" value="1"/>
</dbReference>
<dbReference type="InterPro" id="IPR049035">
    <property type="entry name" value="ADDB_N"/>
</dbReference>
<dbReference type="InterPro" id="IPR014140">
    <property type="entry name" value="DNA_helicase_suAddB"/>
</dbReference>
<dbReference type="InterPro" id="IPR014017">
    <property type="entry name" value="DNA_helicase_UvrD-like_C"/>
</dbReference>
<dbReference type="InterPro" id="IPR027417">
    <property type="entry name" value="P-loop_NTPase"/>
</dbReference>
<dbReference type="InterPro" id="IPR011604">
    <property type="entry name" value="PDDEXK-like_dom_sf"/>
</dbReference>
<dbReference type="InterPro" id="IPR038726">
    <property type="entry name" value="PDDEXK_AddAB-type"/>
</dbReference>
<dbReference type="InterPro" id="IPR011335">
    <property type="entry name" value="Restrct_endonuc-II-like"/>
</dbReference>
<dbReference type="NCBIfam" id="TIGR02773">
    <property type="entry name" value="addB_Gpos"/>
    <property type="match status" value="1"/>
</dbReference>
<dbReference type="PANTHER" id="PTHR30591">
    <property type="entry name" value="RECBCD ENZYME SUBUNIT RECC"/>
    <property type="match status" value="1"/>
</dbReference>
<dbReference type="PANTHER" id="PTHR30591:SF1">
    <property type="entry name" value="RECBCD ENZYME SUBUNIT RECC"/>
    <property type="match status" value="1"/>
</dbReference>
<dbReference type="Pfam" id="PF21445">
    <property type="entry name" value="ADDB_N"/>
    <property type="match status" value="1"/>
</dbReference>
<dbReference type="Pfam" id="PF12705">
    <property type="entry name" value="PDDEXK_1"/>
    <property type="match status" value="1"/>
</dbReference>
<dbReference type="Pfam" id="PF13361">
    <property type="entry name" value="UvrD_C"/>
    <property type="match status" value="1"/>
</dbReference>
<dbReference type="SUPFAM" id="SSF52540">
    <property type="entry name" value="P-loop containing nucleoside triphosphate hydrolases"/>
    <property type="match status" value="1"/>
</dbReference>
<dbReference type="SUPFAM" id="SSF52980">
    <property type="entry name" value="Restriction endonuclease-like"/>
    <property type="match status" value="1"/>
</dbReference>
<dbReference type="PROSITE" id="PS51198">
    <property type="entry name" value="UVRD_HELICASE_ATP_BIND"/>
    <property type="match status" value="1"/>
</dbReference>
<dbReference type="PROSITE" id="PS51217">
    <property type="entry name" value="UVRD_HELICASE_CTER"/>
    <property type="match status" value="1"/>
</dbReference>
<name>ADDB_SYMTH</name>
<keyword id="KW-0004">4Fe-4S</keyword>
<keyword id="KW-0067">ATP-binding</keyword>
<keyword id="KW-0227">DNA damage</keyword>
<keyword id="KW-0234">DNA repair</keyword>
<keyword id="KW-0238">DNA-binding</keyword>
<keyword id="KW-0269">Exonuclease</keyword>
<keyword id="KW-0347">Helicase</keyword>
<keyword id="KW-0378">Hydrolase</keyword>
<keyword id="KW-0408">Iron</keyword>
<keyword id="KW-0411">Iron-sulfur</keyword>
<keyword id="KW-0479">Metal-binding</keyword>
<keyword id="KW-0540">Nuclease</keyword>
<keyword id="KW-0547">Nucleotide-binding</keyword>
<keyword id="KW-1185">Reference proteome</keyword>
<feature type="chain" id="PRO_0000379223" description="ATP-dependent helicase/deoxyribonuclease subunit B">
    <location>
        <begin position="1"/>
        <end position="1165"/>
    </location>
</feature>
<feature type="domain" description="UvrD-like helicase ATP-binding" evidence="1">
    <location>
        <begin position="1"/>
        <end position="324"/>
    </location>
</feature>
<feature type="domain" description="UvrD-like helicase C-terminal" evidence="1">
    <location>
        <begin position="282"/>
        <end position="597"/>
    </location>
</feature>
<feature type="binding site" evidence="1">
    <location>
        <begin position="6"/>
        <end position="13"/>
    </location>
    <ligand>
        <name>ATP</name>
        <dbReference type="ChEBI" id="CHEBI:30616"/>
    </ligand>
</feature>
<feature type="binding site" evidence="1">
    <location>
        <position position="803"/>
    </location>
    <ligand>
        <name>[4Fe-4S] cluster</name>
        <dbReference type="ChEBI" id="CHEBI:49883"/>
    </ligand>
</feature>
<feature type="binding site" evidence="1">
    <location>
        <position position="1121"/>
    </location>
    <ligand>
        <name>[4Fe-4S] cluster</name>
        <dbReference type="ChEBI" id="CHEBI:49883"/>
    </ligand>
</feature>
<feature type="binding site" evidence="1">
    <location>
        <position position="1124"/>
    </location>
    <ligand>
        <name>[4Fe-4S] cluster</name>
        <dbReference type="ChEBI" id="CHEBI:49883"/>
    </ligand>
</feature>
<feature type="binding site" evidence="1">
    <location>
        <position position="1130"/>
    </location>
    <ligand>
        <name>[4Fe-4S] cluster</name>
        <dbReference type="ChEBI" id="CHEBI:49883"/>
    </ligand>
</feature>
<comment type="function">
    <text evidence="1">The heterodimer acts as both an ATP-dependent DNA helicase and an ATP-dependent, dual-direction single-stranded exonuclease. Recognizes the chi site generating a DNA molecule suitable for the initiation of homologous recombination. The AddB subunit has 5' -&gt; 3' nuclease activity but not helicase activity.</text>
</comment>
<comment type="cofactor">
    <cofactor evidence="1">
        <name>Mg(2+)</name>
        <dbReference type="ChEBI" id="CHEBI:18420"/>
    </cofactor>
</comment>
<comment type="cofactor">
    <cofactor evidence="1">
        <name>[4Fe-4S] cluster</name>
        <dbReference type="ChEBI" id="CHEBI:49883"/>
    </cofactor>
    <text evidence="1">Binds 1 [4Fe-4S] cluster.</text>
</comment>
<comment type="subunit">
    <text evidence="1">Heterodimer of AddA and AddB.</text>
</comment>
<comment type="miscellaneous">
    <text evidence="1">Despite having conserved helicase domains, this subunit does not have helicase activity.</text>
</comment>
<comment type="similarity">
    <text evidence="1">Belongs to the helicase family. AddB/RexB type 1 subfamily.</text>
</comment>
<protein>
    <recommendedName>
        <fullName evidence="1">ATP-dependent helicase/deoxyribonuclease subunit B</fullName>
        <ecNumber evidence="1">3.1.-.-</ecNumber>
    </recommendedName>
    <alternativeName>
        <fullName evidence="1">ATP-dependent helicase/nuclease subunit AddB</fullName>
    </alternativeName>
</protein>
<sequence>MRFIIGGAGSGKSQRCLDELTQAAQAAPAGPPLILLVPEQATFQVEQALLGSGRLKGIIRAQVLSFQRLAWRVSLKAGGLALPPLSDLGKQMVLRALLEKKRDDLRLFHQVADKPGFIERVAGSIRELRSYRQGPESLRRQLSQLEAEGLGETSLGAKLHDLALVMDELRSYIEGRFTDPDEYLTVLAARLEESRLLEGAEVWVDGFNGFTPQELAVLGAVMRSARQVHISLCIPPGQLYKAGGHHSPSDLFHPVLSTYDQLMQLAAESGVAVDPPLYLNEPLRFRGAPELAHVERYLFRQSAPAWPGAPERIALVEAQNRREEVAAAAREILRLVREEGLRFREIAVVARDLEGYGDLAATLFAEHGIPAFIDRRRTVAHHPLVELLRAALEVVVQDWAYGPVFRYLKTDLTGVSRAEIDLLENYVIEHGIRGRAWQQQEPWQYLRRYTLEEDAVPAGPAQQALLDEIHRIRRRATAPLLAFQRRLQRRGRPGPTVREITTYLFQLLDDLKVARQLEAWKAEAEQRGDLETAREHEQVWTRVLELFDQIVEGLGDQVLSPKVYLQVLSAGLDGLKLGLIPPGLDQVIVGTVERSRHAGVRATLILGATEKDFPPQPAEDAIFTDRERERLKQSGLDVGPTSLERLFQEQFLTYVALTRGSDFLWISYPLADESGRAAAPSPVVGRMRRLFPELKPRPAAPPAPDAEAAVAQVATPRQLAAAVARALRRARSGYAVEPHWLDLYQCIVLDPDLHREGAAVLAAVGYEEWLRRRGTPVGRELARLLYGDRLVTSVSRLEAFLSCPFRHFAGYALRLQGRAEFTVSAPEFGLFYHAALSLFVRELERDGLAWDTLTPDEAWRRMDSIIDRLAPRLQSEILLSSPQHRYLLRVIRRTLQSSLDYLSEHVLHGEFRPVAVEVPFGEEMDGLPPVEVDLPGGGRVLLRGRIDRVDALEGRDGRWYVRVIDYKSGRRDLRLGDFYHGLTLQLLLYLMAVVEGGEPLLPGTRVPAGALYLPVYDPVEPVNAPVPPDEVRPLRRKRYQARGLVSDDPAVIQAMDAAGLGLIQAKLKKDGTVYKGAPVASPDQFRQLFAHLRRVVRACGEQILQGEAAIAPYRLGPHTACQYCAYRPVCQFDPAVEPQGYRRLEKMDAPDVWQRVAAAGGEGDV</sequence>
<proteinExistence type="inferred from homology"/>
<evidence type="ECO:0000255" key="1">
    <source>
        <dbReference type="HAMAP-Rule" id="MF_01452"/>
    </source>
</evidence>
<gene>
    <name evidence="1" type="primary">addB</name>
    <name type="ordered locus">STH2174</name>
</gene>
<accession>Q67MD4</accession>
<organism>
    <name type="scientific">Symbiobacterium thermophilum (strain DSM 24528 / JCM 14929 / IAM 14863 / T)</name>
    <dbReference type="NCBI Taxonomy" id="292459"/>
    <lineage>
        <taxon>Bacteria</taxon>
        <taxon>Bacillati</taxon>
        <taxon>Bacillota</taxon>
        <taxon>Clostridia</taxon>
        <taxon>Eubacteriales</taxon>
        <taxon>Symbiobacteriaceae</taxon>
        <taxon>Symbiobacterium</taxon>
    </lineage>
</organism>
<reference key="1">
    <citation type="journal article" date="2004" name="Nucleic Acids Res.">
        <title>Genome sequence of Symbiobacterium thermophilum, an uncultivable bacterium that depends on microbial commensalism.</title>
        <authorList>
            <person name="Ueda K."/>
            <person name="Yamashita A."/>
            <person name="Ishikawa J."/>
            <person name="Shimada M."/>
            <person name="Watsuji T."/>
            <person name="Morimura K."/>
            <person name="Ikeda H."/>
            <person name="Hattori M."/>
            <person name="Beppu T."/>
        </authorList>
    </citation>
    <scope>NUCLEOTIDE SEQUENCE [LARGE SCALE GENOMIC DNA]</scope>
    <source>
        <strain>DSM 24528 / JCM 14929 / IAM 14863 / T</strain>
    </source>
</reference>